<sequence length="524" mass="59843">MSQLSMSWMGLGHTAASPWLLLLLAGASCLLAYILTPIYGVFENSLRLRCFPQPPKRNWILGHLGLIQSSEEGLLYIQSLVRTFRDACCWWVGPLHPVIRIFHPAFIKPVVLAPALVAPKDTVFYRFLKPWLGDGLLMSTGDKWSRHRRMLTPAFHFNILKPYVKVFNDSTNIMHAKWQRLASKGSAYLNMFEHISLMTLDSLQKCVFSFDSNCQEKPSEYITAILELSTLVARRHQRLLLHVDLFYYLTHDGMRFRKACRLVHDFTDAVIRERRRTLLDQGGVDVLKAKAKAKTLDFIDVLLLSKDEHGKALSDEDIRAEADTFMFGGHDTTASGLSWILYNLARHPEYQERCRQEVRELLRDREPEEIEWDDLAQLPFLTMCIKESLRLHPPVTAISRCCTQDIVLPDGRVIPKGVISRISIFGTHHNPAVWPDPEVYDPFRFDADNVKGRSPLAFIPFSAGPRNCIGQTFAMSEMKVALALTLLRFRVLPDDKEPRRKPELILRAEGGLWLKVEPLSAGAQ</sequence>
<reference key="1">
    <citation type="submission" date="2000-02" db="EMBL/GenBank/DDBJ databases">
        <title>Protein expression and catalytic activity assessment of mouse 4F clones.</title>
        <authorList>
            <person name="Antonovic L."/>
            <person name="Kawashima H."/>
            <person name="Strobel H."/>
        </authorList>
    </citation>
    <scope>NUCLEOTIDE SEQUENCE [MRNA]</scope>
    <source>
        <tissue>Kidney</tissue>
    </source>
</reference>
<reference key="2">
    <citation type="journal article" date="2005" name="Science">
        <title>The transcriptional landscape of the mammalian genome.</title>
        <authorList>
            <person name="Carninci P."/>
            <person name="Kasukawa T."/>
            <person name="Katayama S."/>
            <person name="Gough J."/>
            <person name="Frith M.C."/>
            <person name="Maeda N."/>
            <person name="Oyama R."/>
            <person name="Ravasi T."/>
            <person name="Lenhard B."/>
            <person name="Wells C."/>
            <person name="Kodzius R."/>
            <person name="Shimokawa K."/>
            <person name="Bajic V.B."/>
            <person name="Brenner S.E."/>
            <person name="Batalov S."/>
            <person name="Forrest A.R."/>
            <person name="Zavolan M."/>
            <person name="Davis M.J."/>
            <person name="Wilming L.G."/>
            <person name="Aidinis V."/>
            <person name="Allen J.E."/>
            <person name="Ambesi-Impiombato A."/>
            <person name="Apweiler R."/>
            <person name="Aturaliya R.N."/>
            <person name="Bailey T.L."/>
            <person name="Bansal M."/>
            <person name="Baxter L."/>
            <person name="Beisel K.W."/>
            <person name="Bersano T."/>
            <person name="Bono H."/>
            <person name="Chalk A.M."/>
            <person name="Chiu K.P."/>
            <person name="Choudhary V."/>
            <person name="Christoffels A."/>
            <person name="Clutterbuck D.R."/>
            <person name="Crowe M.L."/>
            <person name="Dalla E."/>
            <person name="Dalrymple B.P."/>
            <person name="de Bono B."/>
            <person name="Della Gatta G."/>
            <person name="di Bernardo D."/>
            <person name="Down T."/>
            <person name="Engstrom P."/>
            <person name="Fagiolini M."/>
            <person name="Faulkner G."/>
            <person name="Fletcher C.F."/>
            <person name="Fukushima T."/>
            <person name="Furuno M."/>
            <person name="Futaki S."/>
            <person name="Gariboldi M."/>
            <person name="Georgii-Hemming P."/>
            <person name="Gingeras T.R."/>
            <person name="Gojobori T."/>
            <person name="Green R.E."/>
            <person name="Gustincich S."/>
            <person name="Harbers M."/>
            <person name="Hayashi Y."/>
            <person name="Hensch T.K."/>
            <person name="Hirokawa N."/>
            <person name="Hill D."/>
            <person name="Huminiecki L."/>
            <person name="Iacono M."/>
            <person name="Ikeo K."/>
            <person name="Iwama A."/>
            <person name="Ishikawa T."/>
            <person name="Jakt M."/>
            <person name="Kanapin A."/>
            <person name="Katoh M."/>
            <person name="Kawasawa Y."/>
            <person name="Kelso J."/>
            <person name="Kitamura H."/>
            <person name="Kitano H."/>
            <person name="Kollias G."/>
            <person name="Krishnan S.P."/>
            <person name="Kruger A."/>
            <person name="Kummerfeld S.K."/>
            <person name="Kurochkin I.V."/>
            <person name="Lareau L.F."/>
            <person name="Lazarevic D."/>
            <person name="Lipovich L."/>
            <person name="Liu J."/>
            <person name="Liuni S."/>
            <person name="McWilliam S."/>
            <person name="Madan Babu M."/>
            <person name="Madera M."/>
            <person name="Marchionni L."/>
            <person name="Matsuda H."/>
            <person name="Matsuzawa S."/>
            <person name="Miki H."/>
            <person name="Mignone F."/>
            <person name="Miyake S."/>
            <person name="Morris K."/>
            <person name="Mottagui-Tabar S."/>
            <person name="Mulder N."/>
            <person name="Nakano N."/>
            <person name="Nakauchi H."/>
            <person name="Ng P."/>
            <person name="Nilsson R."/>
            <person name="Nishiguchi S."/>
            <person name="Nishikawa S."/>
            <person name="Nori F."/>
            <person name="Ohara O."/>
            <person name="Okazaki Y."/>
            <person name="Orlando V."/>
            <person name="Pang K.C."/>
            <person name="Pavan W.J."/>
            <person name="Pavesi G."/>
            <person name="Pesole G."/>
            <person name="Petrovsky N."/>
            <person name="Piazza S."/>
            <person name="Reed J."/>
            <person name="Reid J.F."/>
            <person name="Ring B.Z."/>
            <person name="Ringwald M."/>
            <person name="Rost B."/>
            <person name="Ruan Y."/>
            <person name="Salzberg S.L."/>
            <person name="Sandelin A."/>
            <person name="Schneider C."/>
            <person name="Schoenbach C."/>
            <person name="Sekiguchi K."/>
            <person name="Semple C.A."/>
            <person name="Seno S."/>
            <person name="Sessa L."/>
            <person name="Sheng Y."/>
            <person name="Shibata Y."/>
            <person name="Shimada H."/>
            <person name="Shimada K."/>
            <person name="Silva D."/>
            <person name="Sinclair B."/>
            <person name="Sperling S."/>
            <person name="Stupka E."/>
            <person name="Sugiura K."/>
            <person name="Sultana R."/>
            <person name="Takenaka Y."/>
            <person name="Taki K."/>
            <person name="Tammoja K."/>
            <person name="Tan S.L."/>
            <person name="Tang S."/>
            <person name="Taylor M.S."/>
            <person name="Tegner J."/>
            <person name="Teichmann S.A."/>
            <person name="Ueda H.R."/>
            <person name="van Nimwegen E."/>
            <person name="Verardo R."/>
            <person name="Wei C.L."/>
            <person name="Yagi K."/>
            <person name="Yamanishi H."/>
            <person name="Zabarovsky E."/>
            <person name="Zhu S."/>
            <person name="Zimmer A."/>
            <person name="Hide W."/>
            <person name="Bult C."/>
            <person name="Grimmond S.M."/>
            <person name="Teasdale R.D."/>
            <person name="Liu E.T."/>
            <person name="Brusic V."/>
            <person name="Quackenbush J."/>
            <person name="Wahlestedt C."/>
            <person name="Mattick J.S."/>
            <person name="Hume D.A."/>
            <person name="Kai C."/>
            <person name="Sasaki D."/>
            <person name="Tomaru Y."/>
            <person name="Fukuda S."/>
            <person name="Kanamori-Katayama M."/>
            <person name="Suzuki M."/>
            <person name="Aoki J."/>
            <person name="Arakawa T."/>
            <person name="Iida J."/>
            <person name="Imamura K."/>
            <person name="Itoh M."/>
            <person name="Kato T."/>
            <person name="Kawaji H."/>
            <person name="Kawagashira N."/>
            <person name="Kawashima T."/>
            <person name="Kojima M."/>
            <person name="Kondo S."/>
            <person name="Konno H."/>
            <person name="Nakano K."/>
            <person name="Ninomiya N."/>
            <person name="Nishio T."/>
            <person name="Okada M."/>
            <person name="Plessy C."/>
            <person name="Shibata K."/>
            <person name="Shiraki T."/>
            <person name="Suzuki S."/>
            <person name="Tagami M."/>
            <person name="Waki K."/>
            <person name="Watahiki A."/>
            <person name="Okamura-Oho Y."/>
            <person name="Suzuki H."/>
            <person name="Kawai J."/>
            <person name="Hayashizaki Y."/>
        </authorList>
    </citation>
    <scope>NUCLEOTIDE SEQUENCE [LARGE SCALE MRNA]</scope>
    <source>
        <strain>C57BL/6J</strain>
        <tissue>Pancreas</tissue>
    </source>
</reference>
<reference key="3">
    <citation type="journal article" date="2009" name="PLoS Biol.">
        <title>Lineage-specific biology revealed by a finished genome assembly of the mouse.</title>
        <authorList>
            <person name="Church D.M."/>
            <person name="Goodstadt L."/>
            <person name="Hillier L.W."/>
            <person name="Zody M.C."/>
            <person name="Goldstein S."/>
            <person name="She X."/>
            <person name="Bult C.J."/>
            <person name="Agarwala R."/>
            <person name="Cherry J.L."/>
            <person name="DiCuccio M."/>
            <person name="Hlavina W."/>
            <person name="Kapustin Y."/>
            <person name="Meric P."/>
            <person name="Maglott D."/>
            <person name="Birtle Z."/>
            <person name="Marques A.C."/>
            <person name="Graves T."/>
            <person name="Zhou S."/>
            <person name="Teague B."/>
            <person name="Potamousis K."/>
            <person name="Churas C."/>
            <person name="Place M."/>
            <person name="Herschleb J."/>
            <person name="Runnheim R."/>
            <person name="Forrest D."/>
            <person name="Amos-Landgraf J."/>
            <person name="Schwartz D.C."/>
            <person name="Cheng Z."/>
            <person name="Lindblad-Toh K."/>
            <person name="Eichler E.E."/>
            <person name="Ponting C.P."/>
        </authorList>
    </citation>
    <scope>NUCLEOTIDE SEQUENCE [LARGE SCALE GENOMIC DNA]</scope>
    <source>
        <strain>C57BL/6J</strain>
    </source>
</reference>
<reference key="4">
    <citation type="journal article" date="2004" name="Genome Res.">
        <title>The status, quality, and expansion of the NIH full-length cDNA project: the Mammalian Gene Collection (MGC).</title>
        <authorList>
            <consortium name="The MGC Project Team"/>
        </authorList>
    </citation>
    <scope>NUCLEOTIDE SEQUENCE [LARGE SCALE MRNA]</scope>
    <source>
        <strain>FVB/N</strain>
        <tissue>Colon</tissue>
    </source>
</reference>
<reference key="5">
    <citation type="journal article" date="2006" name="J. Biol. Chem.">
        <title>Cytochrome P-450 4F18 is the leukotriene B4 omega-1/omega-2 hydroxylase in mouse polymorphonuclear leukocytes: identification as the functional orthologue of human polymorphonuclear leukocyte CYP4F3A in the down-regulation of responses to LTB4.</title>
        <authorList>
            <person name="Christmas P."/>
            <person name="Tolentino K."/>
            <person name="Primo V."/>
            <person name="Berry K.Z."/>
            <person name="Murphy R.C."/>
            <person name="Chen M."/>
            <person name="Lee D.M."/>
            <person name="Soberman R.J."/>
        </authorList>
    </citation>
    <scope>FUNCTION</scope>
    <scope>CATALYTIC ACTIVITY</scope>
    <scope>PATHWAY</scope>
    <scope>SUBCELLULAR LOCATION</scope>
    <scope>TISSUE SPECIFICITY</scope>
    <scope>INDUCTION</scope>
</reference>
<reference key="6">
    <citation type="journal article" date="2010" name="Cell">
        <title>A tissue-specific atlas of mouse protein phosphorylation and expression.</title>
        <authorList>
            <person name="Huttlin E.L."/>
            <person name="Jedrychowski M.P."/>
            <person name="Elias J.E."/>
            <person name="Goswami T."/>
            <person name="Rad R."/>
            <person name="Beausoleil S.A."/>
            <person name="Villen J."/>
            <person name="Haas W."/>
            <person name="Sowa M.E."/>
            <person name="Gygi S.P."/>
        </authorList>
    </citation>
    <scope>IDENTIFICATION BY MASS SPECTROMETRY [LARGE SCALE ANALYSIS]</scope>
    <source>
        <tissue>Spleen</tissue>
    </source>
</reference>
<reference key="7">
    <citation type="journal article" date="2014" name="Biochim. Biophys. Acta">
        <title>Altered leukotriene B4 metabolism in CYP4F18-deficient mice does not impact inflammation following renal ischemia.</title>
        <authorList>
            <person name="Winslow V."/>
            <person name="Vaivoda R."/>
            <person name="Vasilyev A."/>
            <person name="Dombkowski D."/>
            <person name="Douaidy K."/>
            <person name="Stark C."/>
            <person name="Drake J."/>
            <person name="Guilliams E."/>
            <person name="Choudhary D."/>
            <person name="Preffer F."/>
            <person name="Stoilov I."/>
            <person name="Christmas P."/>
        </authorList>
    </citation>
    <scope>FUNCTION</scope>
    <scope>CATALYTIC ACTIVITY</scope>
    <scope>PATHWAY</scope>
    <scope>TISSUE SPECIFICITY</scope>
    <scope>DISRUPTION PHENOTYPE</scope>
</reference>
<feature type="chain" id="PRO_0000238924" description="Cytochrome P450 4F3">
    <location>
        <begin position="1"/>
        <end position="524"/>
    </location>
</feature>
<feature type="transmembrane region" description="Helical" evidence="4">
    <location>
        <begin position="19"/>
        <end position="39"/>
    </location>
</feature>
<feature type="binding site" description="axial binding residue" evidence="1">
    <location>
        <position position="468"/>
    </location>
    <ligand>
        <name>heme</name>
        <dbReference type="ChEBI" id="CHEBI:30413"/>
    </ligand>
    <ligandPart>
        <name>Fe</name>
        <dbReference type="ChEBI" id="CHEBI:18248"/>
    </ligandPart>
</feature>
<feature type="sequence conflict" description="In Ref. 1; AAK15013 and 4; AAH13494." evidence="9" ref="1 4">
    <original>M</original>
    <variation>L</variation>
    <location>
        <position position="6"/>
    </location>
</feature>
<feature type="sequence conflict" description="In Ref. 1; AAK15013 and 4; AAH13494." evidence="9" ref="1 4">
    <original>P</original>
    <variation>Q</variation>
    <location>
        <position position="37"/>
    </location>
</feature>
<feature type="sequence conflict" description="In Ref. 2; BAB25315." evidence="9" ref="2">
    <original>D</original>
    <variation>G</variation>
    <location>
        <position position="142"/>
    </location>
</feature>
<feature type="sequence conflict" description="In Ref. 1; AAK15013 and 4; AAH13494." evidence="9" ref="1 4">
    <original>T</original>
    <variation>A</variation>
    <location>
        <position position="230"/>
    </location>
</feature>
<feature type="sequence conflict" description="In Ref. 1; AAK15013 and 4; AAH13494." evidence="9" ref="1 4">
    <original>V</original>
    <variation>D</variation>
    <location>
        <position position="284"/>
    </location>
</feature>
<name>CP4F3_MOUSE</name>
<comment type="function">
    <text evidence="5 6">A cytochrome P450 monooxygenase involved in the metabolism of the pro-inflammatory lipid mediator leukotriene B4 (LTB4) (PubMed:16380383, PubMed:24632148). Hydroxylates at the omega-1 and omega-2 positions LTB4. This oxidation step leads to LTB4 inactivation, which is postulated to be a crucial part of the resolution of inflammation (PubMed:16380383, PubMed:24632148). Mechanistically, uses molecular oxygen inserting one oxygen atom into a substrate, and reducing the second into a water molecule, with two electrons provided by NADPH via cytochrome P450 reductase (CPR; NADPH-ferrihemoprotein reductase) (PubMed:16380383, PubMed:24632148).</text>
</comment>
<comment type="catalytic activity">
    <reaction evidence="5 6">
        <text>leukotriene B4 + reduced [NADPH--hemoprotein reductase] + O2 = 18-hydroxy-leukotriene B4 + oxidized [NADPH--hemoprotein reductase] + H2O + H(+)</text>
        <dbReference type="Rhea" id="RHEA:53440"/>
        <dbReference type="Rhea" id="RHEA-COMP:11964"/>
        <dbReference type="Rhea" id="RHEA-COMP:11965"/>
        <dbReference type="ChEBI" id="CHEBI:15377"/>
        <dbReference type="ChEBI" id="CHEBI:15378"/>
        <dbReference type="ChEBI" id="CHEBI:15379"/>
        <dbReference type="ChEBI" id="CHEBI:57461"/>
        <dbReference type="ChEBI" id="CHEBI:57618"/>
        <dbReference type="ChEBI" id="CHEBI:58210"/>
        <dbReference type="ChEBI" id="CHEBI:137391"/>
    </reaction>
    <physiologicalReaction direction="left-to-right" evidence="10 11">
        <dbReference type="Rhea" id="RHEA:53441"/>
    </physiologicalReaction>
</comment>
<comment type="catalytic activity">
    <reaction evidence="5 6">
        <text>leukotriene B4 + reduced [NADPH--hemoprotein reductase] + O2 = 19-hydroxy-leukotriene B4 + oxidized [NADPH--hemoprotein reductase] + H2O + H(+)</text>
        <dbReference type="Rhea" id="RHEA:53436"/>
        <dbReference type="Rhea" id="RHEA-COMP:11964"/>
        <dbReference type="Rhea" id="RHEA-COMP:11965"/>
        <dbReference type="ChEBI" id="CHEBI:15377"/>
        <dbReference type="ChEBI" id="CHEBI:15378"/>
        <dbReference type="ChEBI" id="CHEBI:15379"/>
        <dbReference type="ChEBI" id="CHEBI:57461"/>
        <dbReference type="ChEBI" id="CHEBI:57618"/>
        <dbReference type="ChEBI" id="CHEBI:58210"/>
        <dbReference type="ChEBI" id="CHEBI:137390"/>
    </reaction>
    <physiologicalReaction direction="left-to-right" evidence="10 11">
        <dbReference type="Rhea" id="RHEA:53437"/>
    </physiologicalReaction>
</comment>
<comment type="cofactor">
    <cofactor evidence="2">
        <name>heme</name>
        <dbReference type="ChEBI" id="CHEBI:30413"/>
    </cofactor>
</comment>
<comment type="pathway">
    <text evidence="5 6">Lipid metabolism; leukotriene B4 degradation.</text>
</comment>
<comment type="subcellular location">
    <subcellularLocation>
        <location evidence="10">Endoplasmic reticulum membrane</location>
        <topology evidence="9">Single-pass membrane protein</topology>
    </subcellularLocation>
    <subcellularLocation>
        <location evidence="10">Microsome membrane</location>
        <topology evidence="9">Single-pass membrane protein</topology>
    </subcellularLocation>
</comment>
<comment type="tissue specificity">
    <text evidence="5 6">Highest level in polymorphonuclear leukocytes and dendritic cells. Detectable in lymph nodes, spleen, bone marrow and peripheral blood. Highly expressed in ovary. Very low level in liver, kidney, and smooth muscle. Expressed in neutrophils (at protein level).</text>
</comment>
<comment type="induction">
    <text evidence="5">Up-regulated in bone marrow-derived dendritic cells by bacterial lipopolysaccharide (LPS), a ligand for toll-like receptor 4 (TLR4), and by poly(I:C), a ligand for TLR3.</text>
</comment>
<comment type="disruption phenotype">
    <text evidence="6">Mice are born at the expected Mendelian rate. No visible phenotype.</text>
</comment>
<comment type="similarity">
    <text evidence="4">Belongs to the cytochrome P450 family.</text>
</comment>
<dbReference type="EMBL" id="AF233647">
    <property type="protein sequence ID" value="AAK15013.1"/>
    <property type="molecule type" value="mRNA"/>
</dbReference>
<dbReference type="EMBL" id="AK007863">
    <property type="protein sequence ID" value="BAB25315.1"/>
    <property type="molecule type" value="mRNA"/>
</dbReference>
<dbReference type="EMBL" id="AC162522">
    <property type="status" value="NOT_ANNOTATED_CDS"/>
    <property type="molecule type" value="Genomic_DNA"/>
</dbReference>
<dbReference type="EMBL" id="BC013494">
    <property type="protein sequence ID" value="AAH13494.1"/>
    <property type="molecule type" value="mRNA"/>
</dbReference>
<dbReference type="CCDS" id="CCDS22406.1"/>
<dbReference type="RefSeq" id="NP_077764.2">
    <property type="nucleotide sequence ID" value="NM_024444.2"/>
</dbReference>
<dbReference type="RefSeq" id="XP_006509811.1">
    <property type="nucleotide sequence ID" value="XM_006509748.2"/>
</dbReference>
<dbReference type="SMR" id="Q99N16"/>
<dbReference type="BioGRID" id="215120">
    <property type="interactions" value="29"/>
</dbReference>
<dbReference type="FunCoup" id="Q99N16">
    <property type="interactions" value="506"/>
</dbReference>
<dbReference type="STRING" id="10090.ENSMUSP00000003574"/>
<dbReference type="SwissLipids" id="SLP:000001724"/>
<dbReference type="iPTMnet" id="Q99N16"/>
<dbReference type="PhosphoSitePlus" id="Q99N16"/>
<dbReference type="SwissPalm" id="Q99N16"/>
<dbReference type="jPOST" id="Q99N16"/>
<dbReference type="PaxDb" id="10090-ENSMUSP00000003574"/>
<dbReference type="PeptideAtlas" id="Q99N16"/>
<dbReference type="ProteomicsDB" id="285281"/>
<dbReference type="Antibodypedia" id="27108">
    <property type="antibodies" value="130 antibodies from 26 providers"/>
</dbReference>
<dbReference type="Ensembl" id="ENSMUST00000003574.5">
    <property type="protein sequence ID" value="ENSMUSP00000003574.5"/>
    <property type="gene ID" value="ENSMUSG00000003484.5"/>
</dbReference>
<dbReference type="GeneID" id="72054"/>
<dbReference type="KEGG" id="mmu:72054"/>
<dbReference type="UCSC" id="uc009mfe.2">
    <property type="organism name" value="mouse"/>
</dbReference>
<dbReference type="AGR" id="MGI:1919304"/>
<dbReference type="CTD" id="72054"/>
<dbReference type="MGI" id="MGI:1919304">
    <property type="gene designation" value="Cyp4f18"/>
</dbReference>
<dbReference type="VEuPathDB" id="HostDB:ENSMUSG00000003484"/>
<dbReference type="eggNOG" id="KOG0157">
    <property type="taxonomic scope" value="Eukaryota"/>
</dbReference>
<dbReference type="GeneTree" id="ENSGT00940000163407"/>
<dbReference type="HOGENOM" id="CLU_001570_5_1_1"/>
<dbReference type="InParanoid" id="Q99N16"/>
<dbReference type="OMA" id="ICMGRIP"/>
<dbReference type="OrthoDB" id="1470350at2759"/>
<dbReference type="PhylomeDB" id="Q99N16"/>
<dbReference type="TreeFam" id="TF105088"/>
<dbReference type="Reactome" id="R-MMU-211935">
    <property type="pathway name" value="Fatty acids"/>
</dbReference>
<dbReference type="Reactome" id="R-MMU-211958">
    <property type="pathway name" value="Miscellaneous substrates"/>
</dbReference>
<dbReference type="Reactome" id="R-MMU-211979">
    <property type="pathway name" value="Eicosanoids"/>
</dbReference>
<dbReference type="Reactome" id="R-MMU-2142691">
    <property type="pathway name" value="Synthesis of Leukotrienes (LT) and Eoxins (EX)"/>
</dbReference>
<dbReference type="UniPathway" id="UPA00883"/>
<dbReference type="BioGRID-ORCS" id="72054">
    <property type="hits" value="2 hits in 79 CRISPR screens"/>
</dbReference>
<dbReference type="PRO" id="PR:Q99N16"/>
<dbReference type="Proteomes" id="UP000000589">
    <property type="component" value="Chromosome 8"/>
</dbReference>
<dbReference type="RNAct" id="Q99N16">
    <property type="molecule type" value="protein"/>
</dbReference>
<dbReference type="Bgee" id="ENSMUSG00000003484">
    <property type="expression patterns" value="Expressed in granulocyte and 59 other cell types or tissues"/>
</dbReference>
<dbReference type="ExpressionAtlas" id="Q99N16">
    <property type="expression patterns" value="baseline and differential"/>
</dbReference>
<dbReference type="GO" id="GO:0005789">
    <property type="term" value="C:endoplasmic reticulum membrane"/>
    <property type="evidence" value="ECO:0007669"/>
    <property type="project" value="UniProtKB-SubCell"/>
</dbReference>
<dbReference type="GO" id="GO:0020037">
    <property type="term" value="F:heme binding"/>
    <property type="evidence" value="ECO:0007669"/>
    <property type="project" value="InterPro"/>
</dbReference>
<dbReference type="GO" id="GO:0005506">
    <property type="term" value="F:iron ion binding"/>
    <property type="evidence" value="ECO:0007669"/>
    <property type="project" value="InterPro"/>
</dbReference>
<dbReference type="GO" id="GO:0120319">
    <property type="term" value="F:long-chain fatty acid omega-1 hydroxylase activity"/>
    <property type="evidence" value="ECO:0000314"/>
    <property type="project" value="UniProtKB"/>
</dbReference>
<dbReference type="GO" id="GO:0036102">
    <property type="term" value="P:leukotriene B4 metabolic process"/>
    <property type="evidence" value="ECO:0000314"/>
    <property type="project" value="UniProtKB"/>
</dbReference>
<dbReference type="CDD" id="cd20679">
    <property type="entry name" value="CYP4F"/>
    <property type="match status" value="1"/>
</dbReference>
<dbReference type="FunFam" id="1.10.630.10:FF:000005">
    <property type="entry name" value="cytochrome P450 4F22 isoform X2"/>
    <property type="match status" value="1"/>
</dbReference>
<dbReference type="Gene3D" id="1.10.630.10">
    <property type="entry name" value="Cytochrome P450"/>
    <property type="match status" value="1"/>
</dbReference>
<dbReference type="InterPro" id="IPR001128">
    <property type="entry name" value="Cyt_P450"/>
</dbReference>
<dbReference type="InterPro" id="IPR017972">
    <property type="entry name" value="Cyt_P450_CS"/>
</dbReference>
<dbReference type="InterPro" id="IPR002401">
    <property type="entry name" value="Cyt_P450_E_grp-I"/>
</dbReference>
<dbReference type="InterPro" id="IPR036396">
    <property type="entry name" value="Cyt_P450_sf"/>
</dbReference>
<dbReference type="InterPro" id="IPR050196">
    <property type="entry name" value="Cytochrome_P450_Monoox"/>
</dbReference>
<dbReference type="PANTHER" id="PTHR24291:SF202">
    <property type="entry name" value="CYTOCHROME P450 4F3"/>
    <property type="match status" value="1"/>
</dbReference>
<dbReference type="PANTHER" id="PTHR24291">
    <property type="entry name" value="CYTOCHROME P450 FAMILY 4"/>
    <property type="match status" value="1"/>
</dbReference>
<dbReference type="Pfam" id="PF00067">
    <property type="entry name" value="p450"/>
    <property type="match status" value="1"/>
</dbReference>
<dbReference type="PRINTS" id="PR00463">
    <property type="entry name" value="EP450I"/>
</dbReference>
<dbReference type="PRINTS" id="PR00385">
    <property type="entry name" value="P450"/>
</dbReference>
<dbReference type="SUPFAM" id="SSF48264">
    <property type="entry name" value="Cytochrome P450"/>
    <property type="match status" value="1"/>
</dbReference>
<dbReference type="PROSITE" id="PS00086">
    <property type="entry name" value="CYTOCHROME_P450"/>
    <property type="match status" value="1"/>
</dbReference>
<proteinExistence type="evidence at protein level"/>
<evidence type="ECO:0000250" key="1">
    <source>
        <dbReference type="UniProtKB" id="P33274"/>
    </source>
</evidence>
<evidence type="ECO:0000250" key="2">
    <source>
        <dbReference type="UniProtKB" id="P51869"/>
    </source>
</evidence>
<evidence type="ECO:0000250" key="3">
    <source>
        <dbReference type="UniProtKB" id="Q08477"/>
    </source>
</evidence>
<evidence type="ECO:0000255" key="4"/>
<evidence type="ECO:0000269" key="5">
    <source>
    </source>
</evidence>
<evidence type="ECO:0000269" key="6">
    <source>
    </source>
</evidence>
<evidence type="ECO:0000303" key="7">
    <source>
    </source>
</evidence>
<evidence type="ECO:0000303" key="8">
    <source>
    </source>
</evidence>
<evidence type="ECO:0000305" key="9"/>
<evidence type="ECO:0000305" key="10">
    <source>
    </source>
</evidence>
<evidence type="ECO:0000305" key="11">
    <source>
    </source>
</evidence>
<evidence type="ECO:0000312" key="12">
    <source>
        <dbReference type="MGI" id="MGI:1919304"/>
    </source>
</evidence>
<protein>
    <recommendedName>
        <fullName evidence="7">Cytochrome P450 4F3</fullName>
    </recommendedName>
    <alternativeName>
        <fullName>CYPIVF3</fullName>
    </alternativeName>
    <alternativeName>
        <fullName evidence="7">Leukotriene-B(4) omega-1/omega-2 hydroxylase</fullName>
    </alternativeName>
</protein>
<gene>
    <name evidence="3" type="primary">Cyp4f3</name>
    <name evidence="8 12" type="synonym">Cyp4f18</name>
</gene>
<organism>
    <name type="scientific">Mus musculus</name>
    <name type="common">Mouse</name>
    <dbReference type="NCBI Taxonomy" id="10090"/>
    <lineage>
        <taxon>Eukaryota</taxon>
        <taxon>Metazoa</taxon>
        <taxon>Chordata</taxon>
        <taxon>Craniata</taxon>
        <taxon>Vertebrata</taxon>
        <taxon>Euteleostomi</taxon>
        <taxon>Mammalia</taxon>
        <taxon>Eutheria</taxon>
        <taxon>Euarchontoglires</taxon>
        <taxon>Glires</taxon>
        <taxon>Rodentia</taxon>
        <taxon>Myomorpha</taxon>
        <taxon>Muroidea</taxon>
        <taxon>Muridae</taxon>
        <taxon>Murinae</taxon>
        <taxon>Mus</taxon>
        <taxon>Mus</taxon>
    </lineage>
</organism>
<accession>Q99N16</accession>
<accession>E9QLZ3</accession>
<accession>Q9D8N4</accession>
<keyword id="KW-0256">Endoplasmic reticulum</keyword>
<keyword id="KW-0349">Heme</keyword>
<keyword id="KW-0408">Iron</keyword>
<keyword id="KW-0443">Lipid metabolism</keyword>
<keyword id="KW-0472">Membrane</keyword>
<keyword id="KW-0479">Metal-binding</keyword>
<keyword id="KW-0492">Microsome</keyword>
<keyword id="KW-0503">Monooxygenase</keyword>
<keyword id="KW-0560">Oxidoreductase</keyword>
<keyword id="KW-1185">Reference proteome</keyword>
<keyword id="KW-0812">Transmembrane</keyword>
<keyword id="KW-1133">Transmembrane helix</keyword>